<dbReference type="EC" id="3.4.-.-" evidence="1"/>
<dbReference type="EMBL" id="CP001399">
    <property type="protein sequence ID" value="ACP35553.1"/>
    <property type="molecule type" value="Genomic_DNA"/>
</dbReference>
<dbReference type="RefSeq" id="WP_012711449.1">
    <property type="nucleotide sequence ID" value="NC_012589.1"/>
</dbReference>
<dbReference type="SMR" id="C3MQ90"/>
<dbReference type="KEGG" id="sis:LS215_1546"/>
<dbReference type="HOGENOM" id="CLU_108521_2_0_2"/>
<dbReference type="OrthoDB" id="50281at2157"/>
<dbReference type="Proteomes" id="UP000001747">
    <property type="component" value="Chromosome"/>
</dbReference>
<dbReference type="GO" id="GO:0008237">
    <property type="term" value="F:metallopeptidase activity"/>
    <property type="evidence" value="ECO:0007669"/>
    <property type="project" value="UniProtKB-UniRule"/>
</dbReference>
<dbReference type="GO" id="GO:0008270">
    <property type="term" value="F:zinc ion binding"/>
    <property type="evidence" value="ECO:0007669"/>
    <property type="project" value="UniProtKB-UniRule"/>
</dbReference>
<dbReference type="GO" id="GO:0006508">
    <property type="term" value="P:proteolysis"/>
    <property type="evidence" value="ECO:0007669"/>
    <property type="project" value="UniProtKB-UniRule"/>
</dbReference>
<dbReference type="CDD" id="cd11375">
    <property type="entry name" value="Peptidase_M54"/>
    <property type="match status" value="1"/>
</dbReference>
<dbReference type="Gene3D" id="3.40.390.10">
    <property type="entry name" value="Collagenase (Catalytic Domain)"/>
    <property type="match status" value="1"/>
</dbReference>
<dbReference type="HAMAP" id="MF_01842">
    <property type="entry name" value="Archaemetzincin"/>
    <property type="match status" value="1"/>
</dbReference>
<dbReference type="InterPro" id="IPR024079">
    <property type="entry name" value="MetalloPept_cat_dom_sf"/>
</dbReference>
<dbReference type="InterPro" id="IPR012962">
    <property type="entry name" value="Pept_M54_archaemetzincn"/>
</dbReference>
<dbReference type="InterPro" id="IPR012091">
    <property type="entry name" value="Pept_M54_archaemetzncn_arc/bac"/>
</dbReference>
<dbReference type="NCBIfam" id="NF033823">
    <property type="entry name" value="archmetzin"/>
    <property type="match status" value="1"/>
</dbReference>
<dbReference type="PANTHER" id="PTHR15910">
    <property type="entry name" value="ARCHAEMETZINCIN"/>
    <property type="match status" value="1"/>
</dbReference>
<dbReference type="PANTHER" id="PTHR15910:SF1">
    <property type="entry name" value="ARCHAEMETZINCIN-2"/>
    <property type="match status" value="1"/>
</dbReference>
<dbReference type="Pfam" id="PF07998">
    <property type="entry name" value="Peptidase_M54"/>
    <property type="match status" value="1"/>
</dbReference>
<dbReference type="PIRSF" id="PIRSF005785">
    <property type="entry name" value="Zn-prot_arch"/>
    <property type="match status" value="1"/>
</dbReference>
<dbReference type="SUPFAM" id="SSF55486">
    <property type="entry name" value="Metalloproteases ('zincins'), catalytic domain"/>
    <property type="match status" value="1"/>
</dbReference>
<accession>C3MQ90</accession>
<feature type="chain" id="PRO_1000216098" description="Archaemetzincin">
    <location>
        <begin position="1"/>
        <end position="183"/>
    </location>
</feature>
<feature type="active site" description="Proton acceptor" evidence="1">
    <location>
        <position position="132"/>
    </location>
</feature>
<feature type="binding site" evidence="1">
    <location>
        <position position="131"/>
    </location>
    <ligand>
        <name>Zn(2+)</name>
        <dbReference type="ChEBI" id="CHEBI:29105"/>
        <label>1</label>
        <note>catalytic</note>
    </ligand>
</feature>
<feature type="binding site" evidence="1">
    <location>
        <position position="135"/>
    </location>
    <ligand>
        <name>Zn(2+)</name>
        <dbReference type="ChEBI" id="CHEBI:29105"/>
        <label>1</label>
        <note>catalytic</note>
    </ligand>
</feature>
<feature type="binding site" evidence="1">
    <location>
        <position position="141"/>
    </location>
    <ligand>
        <name>Zn(2+)</name>
        <dbReference type="ChEBI" id="CHEBI:29105"/>
        <label>1</label>
        <note>catalytic</note>
    </ligand>
</feature>
<feature type="binding site" evidence="1">
    <location>
        <position position="142"/>
    </location>
    <ligand>
        <name>Zn(2+)</name>
        <dbReference type="ChEBI" id="CHEBI:29105"/>
        <label>2</label>
    </ligand>
</feature>
<feature type="binding site" evidence="1">
    <location>
        <position position="147"/>
    </location>
    <ligand>
        <name>Zn(2+)</name>
        <dbReference type="ChEBI" id="CHEBI:29105"/>
        <label>2</label>
    </ligand>
</feature>
<feature type="binding site" evidence="1">
    <location>
        <position position="166"/>
    </location>
    <ligand>
        <name>Zn(2+)</name>
        <dbReference type="ChEBI" id="CHEBI:29105"/>
        <label>2</label>
    </ligand>
</feature>
<feature type="binding site" evidence="1">
    <location>
        <position position="169"/>
    </location>
    <ligand>
        <name>Zn(2+)</name>
        <dbReference type="ChEBI" id="CHEBI:29105"/>
        <label>2</label>
    </ligand>
</feature>
<comment type="function">
    <text evidence="1">Probable zinc metalloprotease whose natural substrate is unknown.</text>
</comment>
<comment type="cofactor">
    <cofactor evidence="1">
        <name>Zn(2+)</name>
        <dbReference type="ChEBI" id="CHEBI:29105"/>
    </cofactor>
    <text evidence="1">Binds 2 Zn(2+) ions per subunit. One is catalytic, whereas the other seems to have a structural role.</text>
</comment>
<comment type="subunit">
    <text evidence="1">Monomer.</text>
</comment>
<comment type="similarity">
    <text evidence="1">Belongs to the peptidase M54 family.</text>
</comment>
<reference key="1">
    <citation type="journal article" date="2009" name="Proc. Natl. Acad. Sci. U.S.A.">
        <title>Biogeography of the Sulfolobus islandicus pan-genome.</title>
        <authorList>
            <person name="Reno M.L."/>
            <person name="Held N.L."/>
            <person name="Fields C.J."/>
            <person name="Burke P.V."/>
            <person name="Whitaker R.J."/>
        </authorList>
    </citation>
    <scope>NUCLEOTIDE SEQUENCE [LARGE SCALE GENOMIC DNA]</scope>
    <source>
        <strain>L.S.2.15 / Lassen #1</strain>
    </source>
</reference>
<organism>
    <name type="scientific">Saccharolobus islandicus (strain L.S.2.15 / Lassen #1)</name>
    <name type="common">Sulfolobus islandicus</name>
    <dbReference type="NCBI Taxonomy" id="429572"/>
    <lineage>
        <taxon>Archaea</taxon>
        <taxon>Thermoproteota</taxon>
        <taxon>Thermoprotei</taxon>
        <taxon>Sulfolobales</taxon>
        <taxon>Sulfolobaceae</taxon>
        <taxon>Saccharolobus</taxon>
    </lineage>
</organism>
<name>AMZA_SACI2</name>
<evidence type="ECO:0000255" key="1">
    <source>
        <dbReference type="HAMAP-Rule" id="MF_01842"/>
    </source>
</evidence>
<protein>
    <recommendedName>
        <fullName evidence="1">Archaemetzincin</fullName>
        <ecNumber evidence="1">3.4.-.-</ecNumber>
    </recommendedName>
</protein>
<sequence>MTEMKILIVTLTYIEKSIIDEIVNNLSSYGLEVDILFDSRKYLPISAFNWERLQYDAEKVLSFLKSKYDFNYDSIIFLADSDGYIDGYNFVFGLTIDNFAIIFLNRLREEFYNRKPDLELFMKRVVKEVTHEAGHTLGLGHCNTIGCVMNFSNTVEDVDKKQARFCKNCIYKIENLSKYLQRK</sequence>
<gene>
    <name evidence="1" type="primary">amzA</name>
    <name type="ordered locus">LS215_1546</name>
</gene>
<proteinExistence type="inferred from homology"/>
<keyword id="KW-0378">Hydrolase</keyword>
<keyword id="KW-0479">Metal-binding</keyword>
<keyword id="KW-0482">Metalloprotease</keyword>
<keyword id="KW-0645">Protease</keyword>
<keyword id="KW-0862">Zinc</keyword>